<reference key="1">
    <citation type="journal article" date="2006" name="Proc. Natl. Acad. Sci. U.S.A.">
        <title>Genomic analysis of the uncultivated marine crenarchaeote Cenarchaeum symbiosum.</title>
        <authorList>
            <person name="Hallam S.J."/>
            <person name="Konstantinidis K.T."/>
            <person name="Putnam N."/>
            <person name="Schleper C."/>
            <person name="Watanabe Y."/>
            <person name="Sugahara J."/>
            <person name="Preston C."/>
            <person name="de la Torre J."/>
            <person name="Richardson P.M."/>
            <person name="DeLong E.F."/>
        </authorList>
    </citation>
    <scope>NUCLEOTIDE SEQUENCE [LARGE SCALE GENOMIC DNA]</scope>
    <source>
        <strain>A</strain>
    </source>
</reference>
<feature type="chain" id="PRO_0000327194" description="Protoheme IX farnesyltransferase 2">
    <location>
        <begin position="1"/>
        <end position="310"/>
    </location>
</feature>
<feature type="transmembrane region" description="Helical" evidence="1">
    <location>
        <begin position="21"/>
        <end position="41"/>
    </location>
</feature>
<feature type="transmembrane region" description="Helical" evidence="1">
    <location>
        <begin position="46"/>
        <end position="66"/>
    </location>
</feature>
<feature type="transmembrane region" description="Helical" evidence="1">
    <location>
        <begin position="99"/>
        <end position="119"/>
    </location>
</feature>
<feature type="transmembrane region" description="Helical" evidence="1">
    <location>
        <begin position="125"/>
        <end position="145"/>
    </location>
</feature>
<feature type="transmembrane region" description="Helical" evidence="1">
    <location>
        <begin position="153"/>
        <end position="173"/>
    </location>
</feature>
<feature type="transmembrane region" description="Helical" evidence="1">
    <location>
        <begin position="180"/>
        <end position="200"/>
    </location>
</feature>
<feature type="transmembrane region" description="Helical" evidence="1">
    <location>
        <begin position="226"/>
        <end position="246"/>
    </location>
</feature>
<feature type="transmembrane region" description="Helical" evidence="1">
    <location>
        <begin position="256"/>
        <end position="276"/>
    </location>
</feature>
<feature type="transmembrane region" description="Helical" evidence="1">
    <location>
        <begin position="284"/>
        <end position="304"/>
    </location>
</feature>
<protein>
    <recommendedName>
        <fullName evidence="1">Protoheme IX farnesyltransferase 2</fullName>
        <ecNumber evidence="1">2.5.1.141</ecNumber>
    </recommendedName>
    <alternativeName>
        <fullName evidence="1">Heme B farnesyltransferase 2</fullName>
    </alternativeName>
    <alternativeName>
        <fullName evidence="1">Heme O synthase 2</fullName>
    </alternativeName>
</protein>
<comment type="function">
    <text evidence="1">Converts heme B (protoheme IX) to heme O by substitution of the vinyl group on carbon 2 of heme B porphyrin ring with a hydroxyethyl farnesyl side group.</text>
</comment>
<comment type="catalytic activity">
    <reaction evidence="1">
        <text>heme b + (2E,6E)-farnesyl diphosphate + H2O = Fe(II)-heme o + diphosphate</text>
        <dbReference type="Rhea" id="RHEA:28070"/>
        <dbReference type="ChEBI" id="CHEBI:15377"/>
        <dbReference type="ChEBI" id="CHEBI:33019"/>
        <dbReference type="ChEBI" id="CHEBI:60344"/>
        <dbReference type="ChEBI" id="CHEBI:60530"/>
        <dbReference type="ChEBI" id="CHEBI:175763"/>
        <dbReference type="EC" id="2.5.1.141"/>
    </reaction>
</comment>
<comment type="pathway">
    <text evidence="1">Porphyrin-containing compound metabolism; heme O biosynthesis; heme O from protoheme: step 1/1.</text>
</comment>
<comment type="subcellular location">
    <subcellularLocation>
        <location evidence="1">Cell membrane</location>
        <topology evidence="1">Multi-pass membrane protein</topology>
    </subcellularLocation>
</comment>
<comment type="miscellaneous">
    <text evidence="1">Carbon 2 of the heme B porphyrin ring is defined according to the Fischer nomenclature.</text>
</comment>
<comment type="similarity">
    <text evidence="1">Belongs to the UbiA prenyltransferase family. Protoheme IX farnesyltransferase subfamily.</text>
</comment>
<organism>
    <name type="scientific">Cenarchaeum symbiosum (strain A)</name>
    <dbReference type="NCBI Taxonomy" id="414004"/>
    <lineage>
        <taxon>Archaea</taxon>
        <taxon>Nitrososphaerota</taxon>
        <taxon>Candidatus Cenarchaeales</taxon>
        <taxon>Candidatus Cenarchaeaceae</taxon>
        <taxon>Candidatus Cenarchaeum</taxon>
    </lineage>
</organism>
<dbReference type="EC" id="2.5.1.141" evidence="1"/>
<dbReference type="EMBL" id="DP000238">
    <property type="protein sequence ID" value="ABK78595.1"/>
    <property type="molecule type" value="Genomic_DNA"/>
</dbReference>
<dbReference type="SMR" id="A0RZ28"/>
<dbReference type="STRING" id="414004.CENSYa_1991"/>
<dbReference type="EnsemblBacteria" id="ABK78595">
    <property type="protein sequence ID" value="ABK78595"/>
    <property type="gene ID" value="CENSYa_1991"/>
</dbReference>
<dbReference type="KEGG" id="csy:CENSYa_1991"/>
<dbReference type="PATRIC" id="fig|414004.10.peg.1823"/>
<dbReference type="HOGENOM" id="CLU_029631_0_1_2"/>
<dbReference type="UniPathway" id="UPA00834">
    <property type="reaction ID" value="UER00712"/>
</dbReference>
<dbReference type="Proteomes" id="UP000000758">
    <property type="component" value="Chromosome"/>
</dbReference>
<dbReference type="GO" id="GO:0005886">
    <property type="term" value="C:plasma membrane"/>
    <property type="evidence" value="ECO:0007669"/>
    <property type="project" value="UniProtKB-SubCell"/>
</dbReference>
<dbReference type="GO" id="GO:0008495">
    <property type="term" value="F:protoheme IX farnesyltransferase activity"/>
    <property type="evidence" value="ECO:0007669"/>
    <property type="project" value="UniProtKB-UniRule"/>
</dbReference>
<dbReference type="GO" id="GO:0048034">
    <property type="term" value="P:heme O biosynthetic process"/>
    <property type="evidence" value="ECO:0007669"/>
    <property type="project" value="UniProtKB-UniRule"/>
</dbReference>
<dbReference type="CDD" id="cd13957">
    <property type="entry name" value="PT_UbiA_Cox10"/>
    <property type="match status" value="1"/>
</dbReference>
<dbReference type="Gene3D" id="1.10.357.140">
    <property type="entry name" value="UbiA prenyltransferase"/>
    <property type="match status" value="1"/>
</dbReference>
<dbReference type="HAMAP" id="MF_00154">
    <property type="entry name" value="CyoE_CtaB"/>
    <property type="match status" value="1"/>
</dbReference>
<dbReference type="InterPro" id="IPR006369">
    <property type="entry name" value="Protohaem_IX_farnesylTrfase"/>
</dbReference>
<dbReference type="InterPro" id="IPR000537">
    <property type="entry name" value="UbiA_prenyltransferase"/>
</dbReference>
<dbReference type="InterPro" id="IPR044878">
    <property type="entry name" value="UbiA_sf"/>
</dbReference>
<dbReference type="NCBIfam" id="TIGR01473">
    <property type="entry name" value="cyoE_ctaB"/>
    <property type="match status" value="1"/>
</dbReference>
<dbReference type="NCBIfam" id="NF003349">
    <property type="entry name" value="PRK04375.1-2"/>
    <property type="match status" value="1"/>
</dbReference>
<dbReference type="PANTHER" id="PTHR43448">
    <property type="entry name" value="PROTOHEME IX FARNESYLTRANSFERASE, MITOCHONDRIAL"/>
    <property type="match status" value="1"/>
</dbReference>
<dbReference type="PANTHER" id="PTHR43448:SF2">
    <property type="entry name" value="PROTOHEME IX FARNESYLTRANSFERASE, MITOCHONDRIAL"/>
    <property type="match status" value="1"/>
</dbReference>
<dbReference type="Pfam" id="PF01040">
    <property type="entry name" value="UbiA"/>
    <property type="match status" value="1"/>
</dbReference>
<name>COXX2_CENSY</name>
<proteinExistence type="inferred from homology"/>
<accession>A0RZ28</accession>
<evidence type="ECO:0000255" key="1">
    <source>
        <dbReference type="HAMAP-Rule" id="MF_00154"/>
    </source>
</evidence>
<gene>
    <name evidence="1" type="primary">ctaB2</name>
    <name type="ordered locus">CENSYa_1991</name>
</gene>
<keyword id="KW-1003">Cell membrane</keyword>
<keyword id="KW-0350">Heme biosynthesis</keyword>
<keyword id="KW-0472">Membrane</keyword>
<keyword id="KW-1185">Reference proteome</keyword>
<keyword id="KW-0808">Transferase</keyword>
<keyword id="KW-0812">Transmembrane</keyword>
<keyword id="KW-1133">Transmembrane helix</keyword>
<sequence length="310" mass="33195">MQREKAQSRVAVYYELSKPKIWYLLVFTAFGAAVAASGIYGIEISIATWALMLFSVAAGSASANVLTNYHDRDIDAIMKRTQKRPLPSGRVTPAGARNFGLFLAGASMVMAACIALTTTPVQGAWAAAFIAFGLFNNVLVYSYMLKRRSRSNIVLGGLCGGMPPMIGWVAVTTADLWTMGLVMGGLVFIWTPMHIWALTLHFRDDYNKVNVPMLTAVHSEGTSARVIAVSTVAMALFSLAPLLITLEDGAAAVGPVYLATAAASGALIIALSAWVVYKPTEKAAWVLFKFSSPYLAVLFIALMVDAGLRA</sequence>